<feature type="chain" id="PRO_0000367299" description="Protein maelstrom">
    <location>
        <begin position="1"/>
        <end position="459"/>
    </location>
</feature>
<feature type="DNA-binding region" description="HMG box">
    <location>
        <begin position="2"/>
        <end position="69"/>
    </location>
</feature>
<feature type="region of interest" description="Disordered" evidence="1">
    <location>
        <begin position="43"/>
        <end position="78"/>
    </location>
</feature>
<feature type="compositionally biased region" description="Basic and acidic residues" evidence="1">
    <location>
        <begin position="63"/>
        <end position="78"/>
    </location>
</feature>
<feature type="splice variant" id="VSP_036675" description="In isoform C." evidence="9">
    <original>E</original>
    <variation>EPFQ</variation>
    <location>
        <position position="40"/>
    </location>
</feature>
<feature type="mutagenesis site" description="Reduces nuclear aCCumulation in ovary and ovarian somatic cells. Affects transposable element silencing. Causes female sterility." evidence="6">
    <original>E</original>
    <variation>A</variation>
    <location>
        <position position="131"/>
    </location>
</feature>
<feature type="mutagenesis site" description="Reduces nuclear aCCumulation in ovary and ovarian somatic cells. Affects transposable element silencing. Causes female sterility." evidence="6">
    <original>H</original>
    <variation>A</variation>
    <location>
        <position position="291"/>
    </location>
</feature>
<feature type="sequence conflict" description="In Ref. 1; AAB97831." evidence="9" ref="1">
    <original>L</original>
    <variation>F</variation>
    <location>
        <position position="247"/>
    </location>
</feature>
<feature type="helix" evidence="12">
    <location>
        <begin position="85"/>
        <end position="101"/>
    </location>
</feature>
<feature type="helix" evidence="12">
    <location>
        <begin position="105"/>
        <end position="107"/>
    </location>
</feature>
<feature type="strand" evidence="12">
    <location>
        <begin position="110"/>
        <end position="120"/>
    </location>
</feature>
<feature type="strand" evidence="12">
    <location>
        <begin position="122"/>
        <end position="125"/>
    </location>
</feature>
<feature type="strand" evidence="12">
    <location>
        <begin position="127"/>
        <end position="138"/>
    </location>
</feature>
<feature type="turn" evidence="12">
    <location>
        <begin position="139"/>
        <end position="141"/>
    </location>
</feature>
<feature type="strand" evidence="12">
    <location>
        <begin position="142"/>
        <end position="151"/>
    </location>
</feature>
<feature type="helix" evidence="12">
    <location>
        <begin position="164"/>
        <end position="170"/>
    </location>
</feature>
<feature type="helix" evidence="12">
    <location>
        <begin position="186"/>
        <end position="201"/>
    </location>
</feature>
<feature type="strand" evidence="12">
    <location>
        <begin position="203"/>
        <end position="205"/>
    </location>
</feature>
<feature type="strand" evidence="12">
    <location>
        <begin position="207"/>
        <end position="211"/>
    </location>
</feature>
<feature type="helix" evidence="12">
    <location>
        <begin position="213"/>
        <end position="215"/>
    </location>
</feature>
<feature type="helix" evidence="12">
    <location>
        <begin position="216"/>
        <end position="226"/>
    </location>
</feature>
<feature type="helix" evidence="12">
    <location>
        <begin position="231"/>
        <end position="234"/>
    </location>
</feature>
<feature type="strand" evidence="12">
    <location>
        <begin position="239"/>
        <end position="243"/>
    </location>
</feature>
<feature type="helix" evidence="12">
    <location>
        <begin position="244"/>
        <end position="258"/>
    </location>
</feature>
<feature type="helix" evidence="12">
    <location>
        <begin position="268"/>
        <end position="277"/>
    </location>
</feature>
<feature type="turn" evidence="12">
    <location>
        <begin position="279"/>
        <end position="282"/>
    </location>
</feature>
<feature type="helix" evidence="12">
    <location>
        <begin position="289"/>
        <end position="294"/>
    </location>
</feature>
<feature type="helix" evidence="12">
    <location>
        <begin position="297"/>
        <end position="299"/>
    </location>
</feature>
<feature type="helix" evidence="12">
    <location>
        <begin position="301"/>
        <end position="316"/>
    </location>
</feature>
<feature type="helix" evidence="12">
    <location>
        <begin position="317"/>
        <end position="319"/>
    </location>
</feature>
<feature type="turn" evidence="12">
    <location>
        <begin position="327"/>
        <end position="329"/>
    </location>
</feature>
<sequence length="459" mass="51601">MAPKKHSGFMMFVNEWRNRNAEGRRMTLAQAVSHCGTIWEKMNTQQRGPYNSGGKDANVAQRAKRESSNGHGQVDKAQREATESLMDMKRTIERLVLNAKMSHDLENAKFVFVAFNYFTKALTTDVYVPAEFAACEYSLKEGIRSIYSTMIDPGQIIFGQGSDALLHSSTTHDLPLPPNALGEKNMTKLYRNIVDYLSKCQGKGKTLVVFTPAENITMVKSCFRYLECDDDFRDGGEKIQVFDIQYLLFILKKEVMNVADLNDEKINKFATDAFFKKDFFEFTAGIACQYHEDNDRTKYCTQSMVTRWAYTFTDFMCGDLAITVQPGKHIPAQTKPNYLIISSYASSLDHESSFDSFYSLPGSGVKKESQPEACSLSSSRLSVASSSYKPIDHTSFAANLNEVSEFPSLGMRNSSKHHGIAASAQREWNARNLPTHSRLIRKVSDNDFSVNGADGKLKK</sequence>
<accession>Q9VNS0</accession>
<accession>O17317</accession>
<accession>Q86BG5</accession>
<comment type="function">
    <text evidence="2 3 4 5 6">Involved both in the piRNA and miRNA metabolic processes. As a component of the meiotic nuage, plays a central role during oogenesis by repressing transposable elements and preventing their mobilization, which is essential for the germline integrity. Repression of transposable elements is mediated via the piRNA metabolic process, which mediates the repression of transposable elements during meiosis by forming complexes composed of piRNAs and Piwi proteins and governs the repression of transposons. As a nuclear component, it is required for proper differentiation in the germline stem cell (GSC) lineage by repressing microRNA-7 (miR-7), thereby acting as an indirect regulator of bag-of-marbles (Bam). Acts by binding to the promoter of miR-7 gene and repressing its expression; miR-7 repression alleviates the Bam repression by miR-7, thereby allowing differentiation in the germline stem cell (GSC) lineage. Indirectly required to position the microtubule organizing center in stage 2-6 oocytes. Involved in repression of long interspersed nuclear elements (LINEs) including HeT-A, I-element, TART and possibly mst40 LINEs; may have a role in production of piwi-interacting RNA (piRNA) (PubMed:17428915).</text>
</comment>
<comment type="subcellular location">
    <subcellularLocation>
        <location evidence="4 5 6">Cytoplasm</location>
    </subcellularLocation>
    <subcellularLocation>
        <location evidence="5 6 7">Nucleus</location>
    </subcellularLocation>
    <subcellularLocation>
        <location evidence="4 6">Cytoplasm</location>
        <location evidence="4 6">Perinuclear region</location>
    </subcellularLocation>
    <subcellularLocation>
        <location evidence="4 5 6">Cytoplasm</location>
        <location evidence="4 5 6">Cytoplasmic ribonucleoprotein granule</location>
    </subcellularLocation>
    <text evidence="4 5 6">Component of the perinuclear meiotic nuage (also known as germline granule or P granule), a germline-specific membraneless ribonucleoprotein biocondensate involved in post-transcriptional regulation of transposons and mRNAs (PubMed:17428915, PubMed:19758565, PubMed:23159368). Vas, aub, krimp and spn-E are required for localization to the nuage (PubMed:17428915, PubMed:19758565). Shuttles between the cytoplasm and the nucleus; nuclear localization is not dependent on aub (PubMed:19758565).</text>
</comment>
<comment type="alternative products">
    <event type="alternative splicing"/>
    <isoform>
        <id>Q9VNS0-1</id>
        <name>A</name>
        <sequence type="displayed"/>
    </isoform>
    <isoform>
        <id>Q9VNS0-2</id>
        <name>C</name>
        <sequence type="described" ref="VSP_036675"/>
    </isoform>
</comment>
<comment type="tissue specificity">
    <text evidence="6 8">In germaria and egg chambers, it is detected in the germline. In the germarium, it is in all regions, including region I where the germ cells are dividing. In early egg chambers, it is uniformly distributed throughout the nurse cells and oocyte but, by stage 5, it is most concentrated around the outer margins of the cells, closest to the periphery of the egg chamber. Level decreases in stages 5 and 6, but most noticeably in the oocyte, where protein level remains. No detectable protein from stage 8 onward (at protein level).</text>
</comment>
<comment type="disruption phenotype">
    <text evidence="3 4 5 6">Female sterility and defects in karyosome formation and oocyte polarity due to transposable element derepression. Ovary shows mislocalization of 2 proteins involved in the microRNA and/or RNAi pathways, Dicer and AGO2. In testis, transit-amplifying cysts fail to differentiate into primary spermatocytes, instead breaking down into ectopic germline stem cells (GSC) and smaller cysts, due to a depletion of Bag-of-marbles (Bam) protein.</text>
</comment>
<comment type="similarity">
    <text evidence="9">Belongs to the maelstrom family.</text>
</comment>
<protein>
    <recommendedName>
        <fullName evidence="10">Protein maelstrom</fullName>
    </recommendedName>
</protein>
<dbReference type="EMBL" id="AF025953">
    <property type="protein sequence ID" value="AAB97831.1"/>
    <property type="molecule type" value="mRNA"/>
</dbReference>
<dbReference type="EMBL" id="AE014296">
    <property type="protein sequence ID" value="AAF51851.1"/>
    <property type="molecule type" value="Genomic_DNA"/>
</dbReference>
<dbReference type="EMBL" id="AE014296">
    <property type="protein sequence ID" value="AAF51852.1"/>
    <property type="molecule type" value="Genomic_DNA"/>
</dbReference>
<dbReference type="EMBL" id="AE014296">
    <property type="protein sequence ID" value="AAO41286.1"/>
    <property type="molecule type" value="Genomic_DNA"/>
</dbReference>
<dbReference type="EMBL" id="AY119598">
    <property type="protein sequence ID" value="AAM50252.1"/>
    <property type="molecule type" value="mRNA"/>
</dbReference>
<dbReference type="RefSeq" id="NP_001303390.1">
    <molecule id="Q9VNS0-1"/>
    <property type="nucleotide sequence ID" value="NM_001316461.1"/>
</dbReference>
<dbReference type="RefSeq" id="NP_524217.1">
    <molecule id="Q9VNS0-1"/>
    <property type="nucleotide sequence ID" value="NM_079493.4"/>
</dbReference>
<dbReference type="RefSeq" id="NP_730739.1">
    <molecule id="Q9VNS0-1"/>
    <property type="nucleotide sequence ID" value="NM_168958.3"/>
</dbReference>
<dbReference type="RefSeq" id="NP_788566.1">
    <molecule id="Q9VNS0-2"/>
    <property type="nucleotide sequence ID" value="NM_176388.3"/>
</dbReference>
<dbReference type="PDB" id="4YBG">
    <property type="method" value="X-ray"/>
    <property type="resolution" value="1.60 A"/>
    <property type="chains" value="A=84-333"/>
</dbReference>
<dbReference type="PDBsum" id="4YBG"/>
<dbReference type="SMR" id="Q9VNS0"/>
<dbReference type="BioGRID" id="65723">
    <property type="interactions" value="20"/>
</dbReference>
<dbReference type="FunCoup" id="Q9VNS0">
    <property type="interactions" value="49"/>
</dbReference>
<dbReference type="IntAct" id="Q9VNS0">
    <property type="interactions" value="3"/>
</dbReference>
<dbReference type="STRING" id="7227.FBpp0088574"/>
<dbReference type="PaxDb" id="7227-FBpp0088574"/>
<dbReference type="ABCD" id="Q9VNS0">
    <property type="antibodies" value="5 sequenced antibodies"/>
</dbReference>
<dbReference type="DNASU" id="40489"/>
<dbReference type="EnsemblMetazoa" id="FBtr0089631">
    <molecule id="Q9VNS0-2"/>
    <property type="protein sequence ID" value="FBpp0088574"/>
    <property type="gene ID" value="FBgn0016034"/>
</dbReference>
<dbReference type="EnsemblMetazoa" id="FBtr0089632">
    <molecule id="Q9VNS0-1"/>
    <property type="protein sequence ID" value="FBpp0088575"/>
    <property type="gene ID" value="FBgn0016034"/>
</dbReference>
<dbReference type="EnsemblMetazoa" id="FBtr0089633">
    <molecule id="Q9VNS0-1"/>
    <property type="protein sequence ID" value="FBpp0088576"/>
    <property type="gene ID" value="FBgn0016034"/>
</dbReference>
<dbReference type="EnsemblMetazoa" id="FBtr0347062">
    <molecule id="Q9VNS0-1"/>
    <property type="protein sequence ID" value="FBpp0312456"/>
    <property type="gene ID" value="FBgn0016034"/>
</dbReference>
<dbReference type="GeneID" id="40489"/>
<dbReference type="KEGG" id="dme:Dmel_CG11254"/>
<dbReference type="UCSC" id="CG11254-RA">
    <molecule id="Q9VNS0-1"/>
    <property type="organism name" value="d. melanogaster"/>
</dbReference>
<dbReference type="UCSC" id="CG11254-RC">
    <property type="organism name" value="d. melanogaster"/>
</dbReference>
<dbReference type="AGR" id="FB:FBgn0016034"/>
<dbReference type="CTD" id="84944"/>
<dbReference type="FlyBase" id="FBgn0016034">
    <property type="gene designation" value="mael"/>
</dbReference>
<dbReference type="VEuPathDB" id="VectorBase:FBgn0016034"/>
<dbReference type="eggNOG" id="ENOG502QTQB">
    <property type="taxonomic scope" value="Eukaryota"/>
</dbReference>
<dbReference type="GeneTree" id="ENSGT00390000003645"/>
<dbReference type="InParanoid" id="Q9VNS0"/>
<dbReference type="OMA" id="KHEIFDH"/>
<dbReference type="OrthoDB" id="24555at2759"/>
<dbReference type="PhylomeDB" id="Q9VNS0"/>
<dbReference type="SignaLink" id="Q9VNS0"/>
<dbReference type="BioGRID-ORCS" id="40489">
    <property type="hits" value="0 hits in 1 CRISPR screen"/>
</dbReference>
<dbReference type="EvolutionaryTrace" id="Q9VNS0"/>
<dbReference type="GenomeRNAi" id="40489"/>
<dbReference type="PRO" id="PR:Q9VNS0"/>
<dbReference type="Proteomes" id="UP000000803">
    <property type="component" value="Chromosome 3L"/>
</dbReference>
<dbReference type="Bgee" id="FBgn0016034">
    <property type="expression patterns" value="Expressed in egg chamber and 47 other cell types or tissues"/>
</dbReference>
<dbReference type="ExpressionAtlas" id="Q9VNS0">
    <property type="expression patterns" value="baseline and differential"/>
</dbReference>
<dbReference type="GO" id="GO:0005737">
    <property type="term" value="C:cytoplasm"/>
    <property type="evidence" value="ECO:0000314"/>
    <property type="project" value="FlyBase"/>
</dbReference>
<dbReference type="GO" id="GO:0005634">
    <property type="term" value="C:nucleus"/>
    <property type="evidence" value="ECO:0000314"/>
    <property type="project" value="UniProtKB"/>
</dbReference>
<dbReference type="GO" id="GO:0043186">
    <property type="term" value="C:P granule"/>
    <property type="evidence" value="ECO:0000314"/>
    <property type="project" value="FlyBase"/>
</dbReference>
<dbReference type="GO" id="GO:0048471">
    <property type="term" value="C:perinuclear region of cytoplasm"/>
    <property type="evidence" value="ECO:0000314"/>
    <property type="project" value="UniProtKB"/>
</dbReference>
<dbReference type="GO" id="GO:0043565">
    <property type="term" value="F:sequence-specific DNA binding"/>
    <property type="evidence" value="ECO:0000318"/>
    <property type="project" value="GO_Central"/>
</dbReference>
<dbReference type="GO" id="GO:0000976">
    <property type="term" value="F:transcription cis-regulatory region binding"/>
    <property type="evidence" value="ECO:0000314"/>
    <property type="project" value="UniProtKB"/>
</dbReference>
<dbReference type="GO" id="GO:0007010">
    <property type="term" value="P:cytoskeleton organization"/>
    <property type="evidence" value="ECO:0000304"/>
    <property type="project" value="FlyBase"/>
</dbReference>
<dbReference type="GO" id="GO:0046843">
    <property type="term" value="P:dorsal appendage formation"/>
    <property type="evidence" value="ECO:0000315"/>
    <property type="project" value="FlyBase"/>
</dbReference>
<dbReference type="GO" id="GO:0009950">
    <property type="term" value="P:dorsal/ventral axis specification"/>
    <property type="evidence" value="ECO:0000315"/>
    <property type="project" value="FlyBase"/>
</dbReference>
<dbReference type="GO" id="GO:0030718">
    <property type="term" value="P:germ-line stem cell population maintenance"/>
    <property type="evidence" value="ECO:0000315"/>
    <property type="project" value="UniProtKB"/>
</dbReference>
<dbReference type="GO" id="GO:0008298">
    <property type="term" value="P:intracellular mRNA localization"/>
    <property type="evidence" value="ECO:0000315"/>
    <property type="project" value="FlyBase"/>
</dbReference>
<dbReference type="GO" id="GO:0007140">
    <property type="term" value="P:male meiotic nuclear division"/>
    <property type="evidence" value="ECO:0000318"/>
    <property type="project" value="GO_Central"/>
</dbReference>
<dbReference type="GO" id="GO:0031023">
    <property type="term" value="P:microtubule organizing center organization"/>
    <property type="evidence" value="ECO:0000315"/>
    <property type="project" value="UniProtKB"/>
</dbReference>
<dbReference type="GO" id="GO:0010586">
    <property type="term" value="P:miRNA metabolic process"/>
    <property type="evidence" value="ECO:0000315"/>
    <property type="project" value="UniProtKB"/>
</dbReference>
<dbReference type="GO" id="GO:0045892">
    <property type="term" value="P:negative regulation of DNA-templated transcription"/>
    <property type="evidence" value="ECO:0000314"/>
    <property type="project" value="UniProtKB"/>
</dbReference>
<dbReference type="GO" id="GO:0000122">
    <property type="term" value="P:negative regulation of transcription by RNA polymerase II"/>
    <property type="evidence" value="ECO:0000315"/>
    <property type="project" value="FlyBase"/>
</dbReference>
<dbReference type="GO" id="GO:0007314">
    <property type="term" value="P:oocyte anterior/posterior axis specification"/>
    <property type="evidence" value="ECO:0000315"/>
    <property type="project" value="FlyBase"/>
</dbReference>
<dbReference type="GO" id="GO:0048600">
    <property type="term" value="P:oocyte fate commitment"/>
    <property type="evidence" value="ECO:0000315"/>
    <property type="project" value="FlyBase"/>
</dbReference>
<dbReference type="GO" id="GO:0016325">
    <property type="term" value="P:oocyte microtubule cytoskeleton organization"/>
    <property type="evidence" value="ECO:0000315"/>
    <property type="project" value="FlyBase"/>
</dbReference>
<dbReference type="GO" id="GO:0051663">
    <property type="term" value="P:oocyte nucleus localization involved in oocyte dorsal/ventral axis specification"/>
    <property type="evidence" value="ECO:0000315"/>
    <property type="project" value="FlyBase"/>
</dbReference>
<dbReference type="GO" id="GO:0048477">
    <property type="term" value="P:oogenesis"/>
    <property type="evidence" value="ECO:0000315"/>
    <property type="project" value="FlyBase"/>
</dbReference>
<dbReference type="GO" id="GO:0034587">
    <property type="term" value="P:piRNA processing"/>
    <property type="evidence" value="ECO:0000315"/>
    <property type="project" value="UniProtKB"/>
</dbReference>
<dbReference type="GO" id="GO:0008104">
    <property type="term" value="P:protein localization"/>
    <property type="evidence" value="ECO:0000315"/>
    <property type="project" value="FlyBase"/>
</dbReference>
<dbReference type="GO" id="GO:0060964">
    <property type="term" value="P:regulation of miRNA-mediated gene silencing"/>
    <property type="evidence" value="ECO:0007669"/>
    <property type="project" value="InterPro"/>
</dbReference>
<dbReference type="GO" id="GO:0007317">
    <property type="term" value="P:regulation of pole plasm oskar mRNA localization"/>
    <property type="evidence" value="ECO:0000315"/>
    <property type="project" value="FlyBase"/>
</dbReference>
<dbReference type="GO" id="GO:0031047">
    <property type="term" value="P:regulatory ncRNA-mediated gene silencing"/>
    <property type="evidence" value="ECO:0000315"/>
    <property type="project" value="UniProtKB"/>
</dbReference>
<dbReference type="GO" id="GO:0007283">
    <property type="term" value="P:spermatogenesis"/>
    <property type="evidence" value="ECO:0000315"/>
    <property type="project" value="UniProtKB"/>
</dbReference>
<dbReference type="GO" id="GO:0141006">
    <property type="term" value="P:transposable element silencing by piRNA-mediated heterochromatin formation"/>
    <property type="evidence" value="ECO:0000315"/>
    <property type="project" value="FlyBase"/>
</dbReference>
<dbReference type="FunFam" id="1.10.30.10:FF:000057">
    <property type="entry name" value="Protein maelstrom 2"/>
    <property type="match status" value="1"/>
</dbReference>
<dbReference type="Gene3D" id="1.10.30.10">
    <property type="entry name" value="High mobility group box domain"/>
    <property type="match status" value="1"/>
</dbReference>
<dbReference type="InterPro" id="IPR036910">
    <property type="entry name" value="HMG_box_dom_sf"/>
</dbReference>
<dbReference type="InterPro" id="IPR024970">
    <property type="entry name" value="Maelstrom"/>
</dbReference>
<dbReference type="InterPro" id="IPR039259">
    <property type="entry name" value="Protein_maelstrom"/>
</dbReference>
<dbReference type="PANTHER" id="PTHR21358">
    <property type="entry name" value="PROTEIN MAELSTROM HOMOLOG"/>
    <property type="match status" value="1"/>
</dbReference>
<dbReference type="PANTHER" id="PTHR21358:SF4">
    <property type="entry name" value="PROTEIN MAELSTROM HOMOLOG"/>
    <property type="match status" value="1"/>
</dbReference>
<dbReference type="Pfam" id="PF13017">
    <property type="entry name" value="Maelstrom"/>
    <property type="match status" value="1"/>
</dbReference>
<dbReference type="SUPFAM" id="SSF47095">
    <property type="entry name" value="HMG-box"/>
    <property type="match status" value="1"/>
</dbReference>
<proteinExistence type="evidence at protein level"/>
<organism evidence="11">
    <name type="scientific">Drosophila melanogaster</name>
    <name type="common">Fruit fly</name>
    <dbReference type="NCBI Taxonomy" id="7227"/>
    <lineage>
        <taxon>Eukaryota</taxon>
        <taxon>Metazoa</taxon>
        <taxon>Ecdysozoa</taxon>
        <taxon>Arthropoda</taxon>
        <taxon>Hexapoda</taxon>
        <taxon>Insecta</taxon>
        <taxon>Pterygota</taxon>
        <taxon>Neoptera</taxon>
        <taxon>Endopterygota</taxon>
        <taxon>Diptera</taxon>
        <taxon>Brachycera</taxon>
        <taxon>Muscomorpha</taxon>
        <taxon>Ephydroidea</taxon>
        <taxon>Drosophilidae</taxon>
        <taxon>Drosophila</taxon>
        <taxon>Sophophora</taxon>
    </lineage>
</organism>
<keyword id="KW-0002">3D-structure</keyword>
<keyword id="KW-0025">Alternative splicing</keyword>
<keyword id="KW-0963">Cytoplasm</keyword>
<keyword id="KW-0217">Developmental protein</keyword>
<keyword id="KW-0221">Differentiation</keyword>
<keyword id="KW-0238">DNA-binding</keyword>
<keyword id="KW-0469">Meiosis</keyword>
<keyword id="KW-0539">Nucleus</keyword>
<keyword id="KW-0896">Oogenesis</keyword>
<keyword id="KW-1185">Reference proteome</keyword>
<keyword id="KW-0678">Repressor</keyword>
<keyword id="KW-0943">RNA-mediated gene silencing</keyword>
<keyword id="KW-0804">Transcription</keyword>
<keyword id="KW-0805">Transcription regulation</keyword>
<evidence type="ECO:0000256" key="1">
    <source>
        <dbReference type="SAM" id="MobiDB-lite"/>
    </source>
</evidence>
<evidence type="ECO:0000269" key="2">
    <source>
    </source>
</evidence>
<evidence type="ECO:0000269" key="3">
    <source>
    </source>
</evidence>
<evidence type="ECO:0000269" key="4">
    <source>
    </source>
</evidence>
<evidence type="ECO:0000269" key="5">
    <source>
    </source>
</evidence>
<evidence type="ECO:0000269" key="6">
    <source>
    </source>
</evidence>
<evidence type="ECO:0000269" key="7">
    <source>
    </source>
</evidence>
<evidence type="ECO:0000269" key="8">
    <source>
    </source>
</evidence>
<evidence type="ECO:0000305" key="9"/>
<evidence type="ECO:0000312" key="10">
    <source>
        <dbReference type="FlyBase" id="FBgn0016034"/>
    </source>
</evidence>
<evidence type="ECO:0000312" key="11">
    <source>
        <dbReference type="Proteomes" id="UP000000803"/>
    </source>
</evidence>
<evidence type="ECO:0007829" key="12">
    <source>
        <dbReference type="PDB" id="4YBG"/>
    </source>
</evidence>
<name>MAEL_DROME</name>
<reference key="1">
    <citation type="journal article" date="1997" name="Development">
        <title>maelstrom is required for an early step in the establishment of Drosophila oocyte polarity: posterior localization of grk mRNA.</title>
        <authorList>
            <person name="Clegg N.J."/>
            <person name="Frost D.M."/>
            <person name="Larkin M.K."/>
            <person name="Subrahmanyan L."/>
            <person name="Bryant Z."/>
            <person name="Ruohola-Baker H."/>
        </authorList>
    </citation>
    <scope>NUCLEOTIDE SEQUENCE [MRNA] (ISOFORM A)</scope>
    <scope>SUBCELLULAR LOCATION</scope>
    <scope>TISSUE SPECIFICITY</scope>
</reference>
<reference key="2">
    <citation type="journal article" date="2000" name="Science">
        <title>The genome sequence of Drosophila melanogaster.</title>
        <authorList>
            <person name="Adams M.D."/>
            <person name="Celniker S.E."/>
            <person name="Holt R.A."/>
            <person name="Evans C.A."/>
            <person name="Gocayne J.D."/>
            <person name="Amanatides P.G."/>
            <person name="Scherer S.E."/>
            <person name="Li P.W."/>
            <person name="Hoskins R.A."/>
            <person name="Galle R.F."/>
            <person name="George R.A."/>
            <person name="Lewis S.E."/>
            <person name="Richards S."/>
            <person name="Ashburner M."/>
            <person name="Henderson S.N."/>
            <person name="Sutton G.G."/>
            <person name="Wortman J.R."/>
            <person name="Yandell M.D."/>
            <person name="Zhang Q."/>
            <person name="Chen L.X."/>
            <person name="Brandon R.C."/>
            <person name="Rogers Y.-H.C."/>
            <person name="Blazej R.G."/>
            <person name="Champe M."/>
            <person name="Pfeiffer B.D."/>
            <person name="Wan K.H."/>
            <person name="Doyle C."/>
            <person name="Baxter E.G."/>
            <person name="Helt G."/>
            <person name="Nelson C.R."/>
            <person name="Miklos G.L.G."/>
            <person name="Abril J.F."/>
            <person name="Agbayani A."/>
            <person name="An H.-J."/>
            <person name="Andrews-Pfannkoch C."/>
            <person name="Baldwin D."/>
            <person name="Ballew R.M."/>
            <person name="Basu A."/>
            <person name="Baxendale J."/>
            <person name="Bayraktaroglu L."/>
            <person name="Beasley E.M."/>
            <person name="Beeson K.Y."/>
            <person name="Benos P.V."/>
            <person name="Berman B.P."/>
            <person name="Bhandari D."/>
            <person name="Bolshakov S."/>
            <person name="Borkova D."/>
            <person name="Botchan M.R."/>
            <person name="Bouck J."/>
            <person name="Brokstein P."/>
            <person name="Brottier P."/>
            <person name="Burtis K.C."/>
            <person name="Busam D.A."/>
            <person name="Butler H."/>
            <person name="Cadieu E."/>
            <person name="Center A."/>
            <person name="Chandra I."/>
            <person name="Cherry J.M."/>
            <person name="Cawley S."/>
            <person name="Dahlke C."/>
            <person name="Davenport L.B."/>
            <person name="Davies P."/>
            <person name="de Pablos B."/>
            <person name="Delcher A."/>
            <person name="Deng Z."/>
            <person name="Mays A.D."/>
            <person name="Dew I."/>
            <person name="Dietz S.M."/>
            <person name="Dodson K."/>
            <person name="Doup L.E."/>
            <person name="Downes M."/>
            <person name="Dugan-Rocha S."/>
            <person name="Dunkov B.C."/>
            <person name="Dunn P."/>
            <person name="Durbin K.J."/>
            <person name="Evangelista C.C."/>
            <person name="Ferraz C."/>
            <person name="Ferriera S."/>
            <person name="Fleischmann W."/>
            <person name="Fosler C."/>
            <person name="Gabrielian A.E."/>
            <person name="Garg N.S."/>
            <person name="Gelbart W.M."/>
            <person name="Glasser K."/>
            <person name="Glodek A."/>
            <person name="Gong F."/>
            <person name="Gorrell J.H."/>
            <person name="Gu Z."/>
            <person name="Guan P."/>
            <person name="Harris M."/>
            <person name="Harris N.L."/>
            <person name="Harvey D.A."/>
            <person name="Heiman T.J."/>
            <person name="Hernandez J.R."/>
            <person name="Houck J."/>
            <person name="Hostin D."/>
            <person name="Houston K.A."/>
            <person name="Howland T.J."/>
            <person name="Wei M.-H."/>
            <person name="Ibegwam C."/>
            <person name="Jalali M."/>
            <person name="Kalush F."/>
            <person name="Karpen G.H."/>
            <person name="Ke Z."/>
            <person name="Kennison J.A."/>
            <person name="Ketchum K.A."/>
            <person name="Kimmel B.E."/>
            <person name="Kodira C.D."/>
            <person name="Kraft C.L."/>
            <person name="Kravitz S."/>
            <person name="Kulp D."/>
            <person name="Lai Z."/>
            <person name="Lasko P."/>
            <person name="Lei Y."/>
            <person name="Levitsky A.A."/>
            <person name="Li J.H."/>
            <person name="Li Z."/>
            <person name="Liang Y."/>
            <person name="Lin X."/>
            <person name="Liu X."/>
            <person name="Mattei B."/>
            <person name="McIntosh T.C."/>
            <person name="McLeod M.P."/>
            <person name="McPherson D."/>
            <person name="Merkulov G."/>
            <person name="Milshina N.V."/>
            <person name="Mobarry C."/>
            <person name="Morris J."/>
            <person name="Moshrefi A."/>
            <person name="Mount S.M."/>
            <person name="Moy M."/>
            <person name="Murphy B."/>
            <person name="Murphy L."/>
            <person name="Muzny D.M."/>
            <person name="Nelson D.L."/>
            <person name="Nelson D.R."/>
            <person name="Nelson K.A."/>
            <person name="Nixon K."/>
            <person name="Nusskern D.R."/>
            <person name="Pacleb J.M."/>
            <person name="Palazzolo M."/>
            <person name="Pittman G.S."/>
            <person name="Pan S."/>
            <person name="Pollard J."/>
            <person name="Puri V."/>
            <person name="Reese M.G."/>
            <person name="Reinert K."/>
            <person name="Remington K."/>
            <person name="Saunders R.D.C."/>
            <person name="Scheeler F."/>
            <person name="Shen H."/>
            <person name="Shue B.C."/>
            <person name="Siden-Kiamos I."/>
            <person name="Simpson M."/>
            <person name="Skupski M.P."/>
            <person name="Smith T.J."/>
            <person name="Spier E."/>
            <person name="Spradling A.C."/>
            <person name="Stapleton M."/>
            <person name="Strong R."/>
            <person name="Sun E."/>
            <person name="Svirskas R."/>
            <person name="Tector C."/>
            <person name="Turner R."/>
            <person name="Venter E."/>
            <person name="Wang A.H."/>
            <person name="Wang X."/>
            <person name="Wang Z.-Y."/>
            <person name="Wassarman D.A."/>
            <person name="Weinstock G.M."/>
            <person name="Weissenbach J."/>
            <person name="Williams S.M."/>
            <person name="Woodage T."/>
            <person name="Worley K.C."/>
            <person name="Wu D."/>
            <person name="Yang S."/>
            <person name="Yao Q.A."/>
            <person name="Ye J."/>
            <person name="Yeh R.-F."/>
            <person name="Zaveri J.S."/>
            <person name="Zhan M."/>
            <person name="Zhang G."/>
            <person name="Zhao Q."/>
            <person name="Zheng L."/>
            <person name="Zheng X.H."/>
            <person name="Zhong F.N."/>
            <person name="Zhong W."/>
            <person name="Zhou X."/>
            <person name="Zhu S.C."/>
            <person name="Zhu X."/>
            <person name="Smith H.O."/>
            <person name="Gibbs R.A."/>
            <person name="Myers E.W."/>
            <person name="Rubin G.M."/>
            <person name="Venter J.C."/>
        </authorList>
    </citation>
    <scope>NUCLEOTIDE SEQUENCE [LARGE SCALE GENOMIC DNA]</scope>
    <source>
        <strain>Berkeley</strain>
    </source>
</reference>
<reference key="3">
    <citation type="journal article" date="2002" name="Genome Biol.">
        <title>Annotation of the Drosophila melanogaster euchromatic genome: a systematic review.</title>
        <authorList>
            <person name="Misra S."/>
            <person name="Crosby M.A."/>
            <person name="Mungall C.J."/>
            <person name="Matthews B.B."/>
            <person name="Campbell K.S."/>
            <person name="Hradecky P."/>
            <person name="Huang Y."/>
            <person name="Kaminker J.S."/>
            <person name="Millburn G.H."/>
            <person name="Prochnik S.E."/>
            <person name="Smith C.D."/>
            <person name="Tupy J.L."/>
            <person name="Whitfield E.J."/>
            <person name="Bayraktaroglu L."/>
            <person name="Berman B.P."/>
            <person name="Bettencourt B.R."/>
            <person name="Celniker S.E."/>
            <person name="de Grey A.D.N.J."/>
            <person name="Drysdale R.A."/>
            <person name="Harris N.L."/>
            <person name="Richter J."/>
            <person name="Russo S."/>
            <person name="Schroeder A.J."/>
            <person name="Shu S.Q."/>
            <person name="Stapleton M."/>
            <person name="Yamada C."/>
            <person name="Ashburner M."/>
            <person name="Gelbart W.M."/>
            <person name="Rubin G.M."/>
            <person name="Lewis S.E."/>
        </authorList>
    </citation>
    <scope>GENOME REANNOTATION</scope>
    <scope>ALTERNATIVE SPLICING</scope>
    <source>
        <strain>Berkeley</strain>
    </source>
</reference>
<reference key="4">
    <citation type="journal article" date="2002" name="Genome Biol.">
        <title>A Drosophila full-length cDNA resource.</title>
        <authorList>
            <person name="Stapleton M."/>
            <person name="Carlson J.W."/>
            <person name="Brokstein P."/>
            <person name="Yu C."/>
            <person name="Champe M."/>
            <person name="George R.A."/>
            <person name="Guarin H."/>
            <person name="Kronmiller B."/>
            <person name="Pacleb J.M."/>
            <person name="Park S."/>
            <person name="Wan K.H."/>
            <person name="Rubin G.M."/>
            <person name="Celniker S.E."/>
        </authorList>
    </citation>
    <scope>NUCLEOTIDE SEQUENCE [LARGE SCALE MRNA] (ISOFORM A)</scope>
    <source>
        <strain>Berkeley</strain>
        <tissue>Embryo</tissue>
    </source>
</reference>
<reference key="5">
    <citation type="journal article" date="2001" name="Dev. Genes Evol.">
        <title>Maelstrom is required to position the MTOC in stage 2-6 Drosophila oocytes.</title>
        <authorList>
            <person name="Clegg N.J."/>
            <person name="Findley S.D."/>
            <person name="Mahowald A.P."/>
            <person name="Ruohola-Baker H."/>
        </authorList>
    </citation>
    <scope>FUNCTION</scope>
</reference>
<reference key="6">
    <citation type="journal article" date="2003" name="Development">
        <title>Maelstrom, a Drosophila spindle-class gene, encodes a protein that colocalizes with Vasa and RDE1/AGO1 homolog, Aubergine, in nuage.</title>
        <authorList>
            <person name="Findley S.D."/>
            <person name="Tamanaha M."/>
            <person name="Clegg N.J."/>
            <person name="Ruohola-Baker H."/>
        </authorList>
    </citation>
    <scope>FUNCTION</scope>
    <scope>SUBCELLULAR LOCATION</scope>
    <scope>DISRUPTION PHENOTYPE</scope>
</reference>
<reference key="7">
    <citation type="journal article" date="2007" name="Proc. Natl. Acad. Sci. U.S.A.">
        <title>Unique germ-line organelle, nuage, functions to repress selfish genetic elements in Drosophila melanogaster.</title>
        <authorList>
            <person name="Lim A.K."/>
            <person name="Kai T."/>
        </authorList>
    </citation>
    <scope>FUNCTION</scope>
    <scope>SUBCELLULAR LOCATION</scope>
    <scope>DISRUPTION PHENOTYPE</scope>
</reference>
<reference key="8">
    <citation type="journal article" date="2007" name="Proc. Natl. Acad. Sci. U.S.A.">
        <authorList>
            <person name="Lim A.K."/>
            <person name="Kai T."/>
        </authorList>
    </citation>
    <scope>ERRATUM OF PUBMED:17428915</scope>
</reference>
<reference key="9">
    <citation type="journal article" date="2009" name="Dev. Cell">
        <title>Drosophila maelstrom ensures proper germline stem cell lineage differentiation by repressing microRNA-7.</title>
        <authorList>
            <person name="Pek J.W."/>
            <person name="Lim A.K."/>
            <person name="Kai T."/>
        </authorList>
    </citation>
    <scope>FUNCTION</scope>
    <scope>SUBCELLULAR LOCATION</scope>
    <scope>DNA-BINDING</scope>
    <scope>DISRUPTION PHENOTYPE</scope>
</reference>
<reference key="10">
    <citation type="journal article" date="2012" name="Cell">
        <title>Transcriptional silencing of transposons by Piwi and maelstrom and its impact on chromatin state and gene expression.</title>
        <authorList>
            <person name="Sienski G."/>
            <person name="Donertas D."/>
            <person name="Brennecke J."/>
        </authorList>
    </citation>
    <scope>FUNCTION</scope>
    <scope>SUBCELLULAR LOCATION</scope>
    <scope>TISSUE SPECIFICITY</scope>
    <scope>DISRUPTION PHENOTYPE</scope>
    <scope>MUTAGENESIS OF GLU-131 AND HIS-291</scope>
</reference>
<reference key="11">
    <citation type="journal article" date="2013" name="Genes Dev.">
        <title>DmGTSF1 is necessary for Piwi-piRISC-mediated transcriptional transposon silencing in the Drosophila ovary.</title>
        <authorList>
            <person name="Ohtani H."/>
            <person name="Iwasaki Y.W."/>
            <person name="Shibuya A."/>
            <person name="Siomi H."/>
            <person name="Siomi M.C."/>
            <person name="Saito K."/>
        </authorList>
    </citation>
    <scope>SUBCELLULAR LOCATION</scope>
</reference>
<gene>
    <name evidence="10" type="primary">mael</name>
    <name evidence="10" type="ORF">CG11254</name>
</gene>